<gene>
    <name evidence="1" type="primary">rhlB</name>
    <name type="ordered locus">Sbal223_3876</name>
</gene>
<protein>
    <recommendedName>
        <fullName evidence="1">ATP-dependent RNA helicase RhlB</fullName>
        <ecNumber evidence="1">3.6.4.13</ecNumber>
    </recommendedName>
</protein>
<name>RHLB_SHEB2</name>
<proteinExistence type="inferred from homology"/>
<reference key="1">
    <citation type="submission" date="2008-12" db="EMBL/GenBank/DDBJ databases">
        <title>Complete sequence of chromosome of Shewanella baltica OS223.</title>
        <authorList>
            <consortium name="US DOE Joint Genome Institute"/>
            <person name="Lucas S."/>
            <person name="Copeland A."/>
            <person name="Lapidus A."/>
            <person name="Glavina del Rio T."/>
            <person name="Dalin E."/>
            <person name="Tice H."/>
            <person name="Bruce D."/>
            <person name="Goodwin L."/>
            <person name="Pitluck S."/>
            <person name="Chertkov O."/>
            <person name="Meincke L."/>
            <person name="Brettin T."/>
            <person name="Detter J.C."/>
            <person name="Han C."/>
            <person name="Kuske C.R."/>
            <person name="Larimer F."/>
            <person name="Land M."/>
            <person name="Hauser L."/>
            <person name="Kyrpides N."/>
            <person name="Ovchinnikova G."/>
            <person name="Brettar I."/>
            <person name="Rodrigues J."/>
            <person name="Konstantinidis K."/>
            <person name="Tiedje J."/>
        </authorList>
    </citation>
    <scope>NUCLEOTIDE SEQUENCE [LARGE SCALE GENOMIC DNA]</scope>
    <source>
        <strain>OS223</strain>
    </source>
</reference>
<sequence length="438" mass="49115">MSETHLSTQRFADLPLHPEVKQALAENGFEFCTPIQALSLPVLLQSKDIAGQAQTGTGKTMAFLVATFNHLLSTPVPEGRLINQPRAIIMAPTRELAIQIAKDAILLAKHTHLKVGIVYGGESYDVQRKVLDQGVDILIGTTGRIIDYVRQGIIGLNSIQAVVLDEADRMFDLGFIKDIRFLFRRMPEANQRLNMLFSATLSMKVQELAYDHMNEPVKVEIAPEEKTSKNIKEEIFYPSQEEKMRLLLTLIEEDWPEKAIVFSNTKHSCETLWSWLEGDGHRVGLLTGDVPQKKRIRILEQFTSGQLDILVATDVAARGLHISDVSHVYNYDLPDDCEDYVHRIGRTGRAGNKGMSISFACEEYALNLPAIESYINHSIPVSNYDSEALLADIPTPAKIHRKHPSGTRNLRDRSGTSRPGAQRSGARPPRHDRTRRHS</sequence>
<dbReference type="EC" id="3.6.4.13" evidence="1"/>
<dbReference type="EMBL" id="CP001252">
    <property type="protein sequence ID" value="ACK48351.1"/>
    <property type="molecule type" value="Genomic_DNA"/>
</dbReference>
<dbReference type="RefSeq" id="WP_006083359.1">
    <property type="nucleotide sequence ID" value="NC_011663.1"/>
</dbReference>
<dbReference type="SMR" id="B8E670"/>
<dbReference type="KEGG" id="sbp:Sbal223_3876"/>
<dbReference type="HOGENOM" id="CLU_003041_28_3_6"/>
<dbReference type="Proteomes" id="UP000002507">
    <property type="component" value="Chromosome"/>
</dbReference>
<dbReference type="GO" id="GO:0005829">
    <property type="term" value="C:cytosol"/>
    <property type="evidence" value="ECO:0007669"/>
    <property type="project" value="TreeGrafter"/>
</dbReference>
<dbReference type="GO" id="GO:0005524">
    <property type="term" value="F:ATP binding"/>
    <property type="evidence" value="ECO:0007669"/>
    <property type="project" value="UniProtKB-UniRule"/>
</dbReference>
<dbReference type="GO" id="GO:0016887">
    <property type="term" value="F:ATP hydrolysis activity"/>
    <property type="evidence" value="ECO:0007669"/>
    <property type="project" value="RHEA"/>
</dbReference>
<dbReference type="GO" id="GO:0003723">
    <property type="term" value="F:RNA binding"/>
    <property type="evidence" value="ECO:0007669"/>
    <property type="project" value="UniProtKB-UniRule"/>
</dbReference>
<dbReference type="GO" id="GO:0003724">
    <property type="term" value="F:RNA helicase activity"/>
    <property type="evidence" value="ECO:0007669"/>
    <property type="project" value="UniProtKB-UniRule"/>
</dbReference>
<dbReference type="GO" id="GO:0006401">
    <property type="term" value="P:RNA catabolic process"/>
    <property type="evidence" value="ECO:0007669"/>
    <property type="project" value="UniProtKB-UniRule"/>
</dbReference>
<dbReference type="CDD" id="cd00268">
    <property type="entry name" value="DEADc"/>
    <property type="match status" value="1"/>
</dbReference>
<dbReference type="CDD" id="cd18787">
    <property type="entry name" value="SF2_C_DEAD"/>
    <property type="match status" value="1"/>
</dbReference>
<dbReference type="FunFam" id="3.40.50.300:FF:000008">
    <property type="entry name" value="ATP-dependent RNA helicase RhlB"/>
    <property type="match status" value="1"/>
</dbReference>
<dbReference type="FunFam" id="3.40.50.300:FF:000312">
    <property type="entry name" value="ATP-dependent RNA helicase RhlB"/>
    <property type="match status" value="1"/>
</dbReference>
<dbReference type="Gene3D" id="3.40.50.300">
    <property type="entry name" value="P-loop containing nucleotide triphosphate hydrolases"/>
    <property type="match status" value="2"/>
</dbReference>
<dbReference type="HAMAP" id="MF_00661">
    <property type="entry name" value="DEAD_helicase_RhlB"/>
    <property type="match status" value="1"/>
</dbReference>
<dbReference type="InterPro" id="IPR011545">
    <property type="entry name" value="DEAD/DEAH_box_helicase_dom"/>
</dbReference>
<dbReference type="InterPro" id="IPR050079">
    <property type="entry name" value="DEAD_box_RNA_helicase"/>
</dbReference>
<dbReference type="InterPro" id="IPR014001">
    <property type="entry name" value="Helicase_ATP-bd"/>
</dbReference>
<dbReference type="InterPro" id="IPR001650">
    <property type="entry name" value="Helicase_C-like"/>
</dbReference>
<dbReference type="InterPro" id="IPR027417">
    <property type="entry name" value="P-loop_NTPase"/>
</dbReference>
<dbReference type="InterPro" id="IPR000629">
    <property type="entry name" value="RNA-helicase_DEAD-box_CS"/>
</dbReference>
<dbReference type="InterPro" id="IPR023554">
    <property type="entry name" value="RNA_helicase_ATP-dep_RhlB"/>
</dbReference>
<dbReference type="InterPro" id="IPR014014">
    <property type="entry name" value="RNA_helicase_DEAD_Q_motif"/>
</dbReference>
<dbReference type="NCBIfam" id="NF003419">
    <property type="entry name" value="PRK04837.1"/>
    <property type="match status" value="1"/>
</dbReference>
<dbReference type="PANTHER" id="PTHR47959:SF10">
    <property type="entry name" value="ATP-DEPENDENT RNA HELICASE RHLB"/>
    <property type="match status" value="1"/>
</dbReference>
<dbReference type="PANTHER" id="PTHR47959">
    <property type="entry name" value="ATP-DEPENDENT RNA HELICASE RHLE-RELATED"/>
    <property type="match status" value="1"/>
</dbReference>
<dbReference type="Pfam" id="PF00270">
    <property type="entry name" value="DEAD"/>
    <property type="match status" value="1"/>
</dbReference>
<dbReference type="Pfam" id="PF00271">
    <property type="entry name" value="Helicase_C"/>
    <property type="match status" value="1"/>
</dbReference>
<dbReference type="SMART" id="SM00487">
    <property type="entry name" value="DEXDc"/>
    <property type="match status" value="1"/>
</dbReference>
<dbReference type="SMART" id="SM00490">
    <property type="entry name" value="HELICc"/>
    <property type="match status" value="1"/>
</dbReference>
<dbReference type="SUPFAM" id="SSF52540">
    <property type="entry name" value="P-loop containing nucleoside triphosphate hydrolases"/>
    <property type="match status" value="1"/>
</dbReference>
<dbReference type="PROSITE" id="PS00039">
    <property type="entry name" value="DEAD_ATP_HELICASE"/>
    <property type="match status" value="1"/>
</dbReference>
<dbReference type="PROSITE" id="PS51192">
    <property type="entry name" value="HELICASE_ATP_BIND_1"/>
    <property type="match status" value="1"/>
</dbReference>
<dbReference type="PROSITE" id="PS51194">
    <property type="entry name" value="HELICASE_CTER"/>
    <property type="match status" value="1"/>
</dbReference>
<dbReference type="PROSITE" id="PS51195">
    <property type="entry name" value="Q_MOTIF"/>
    <property type="match status" value="1"/>
</dbReference>
<organism>
    <name type="scientific">Shewanella baltica (strain OS223)</name>
    <dbReference type="NCBI Taxonomy" id="407976"/>
    <lineage>
        <taxon>Bacteria</taxon>
        <taxon>Pseudomonadati</taxon>
        <taxon>Pseudomonadota</taxon>
        <taxon>Gammaproteobacteria</taxon>
        <taxon>Alteromonadales</taxon>
        <taxon>Shewanellaceae</taxon>
        <taxon>Shewanella</taxon>
    </lineage>
</organism>
<evidence type="ECO:0000255" key="1">
    <source>
        <dbReference type="HAMAP-Rule" id="MF_00661"/>
    </source>
</evidence>
<evidence type="ECO:0000256" key="2">
    <source>
        <dbReference type="SAM" id="MobiDB-lite"/>
    </source>
</evidence>
<accession>B8E670</accession>
<keyword id="KW-0067">ATP-binding</keyword>
<keyword id="KW-0963">Cytoplasm</keyword>
<keyword id="KW-0347">Helicase</keyword>
<keyword id="KW-0378">Hydrolase</keyword>
<keyword id="KW-0547">Nucleotide-binding</keyword>
<keyword id="KW-0694">RNA-binding</keyword>
<feature type="chain" id="PRO_1000147584" description="ATP-dependent RNA helicase RhlB">
    <location>
        <begin position="1"/>
        <end position="438"/>
    </location>
</feature>
<feature type="domain" description="Helicase ATP-binding" evidence="1">
    <location>
        <begin position="40"/>
        <end position="219"/>
    </location>
</feature>
<feature type="domain" description="Helicase C-terminal" evidence="1">
    <location>
        <begin position="243"/>
        <end position="390"/>
    </location>
</feature>
<feature type="region of interest" description="Disordered" evidence="2">
    <location>
        <begin position="395"/>
        <end position="438"/>
    </location>
</feature>
<feature type="short sequence motif" description="Q motif">
    <location>
        <begin position="9"/>
        <end position="37"/>
    </location>
</feature>
<feature type="short sequence motif" description="DEAD box">
    <location>
        <begin position="165"/>
        <end position="168"/>
    </location>
</feature>
<feature type="compositionally biased region" description="Basic residues" evidence="2">
    <location>
        <begin position="428"/>
        <end position="438"/>
    </location>
</feature>
<feature type="binding site" evidence="1">
    <location>
        <begin position="53"/>
        <end position="60"/>
    </location>
    <ligand>
        <name>ATP</name>
        <dbReference type="ChEBI" id="CHEBI:30616"/>
    </ligand>
</feature>
<comment type="function">
    <text evidence="1">DEAD-box RNA helicase involved in RNA degradation. Has RNA-dependent ATPase activity and unwinds double-stranded RNA.</text>
</comment>
<comment type="catalytic activity">
    <reaction evidence="1">
        <text>ATP + H2O = ADP + phosphate + H(+)</text>
        <dbReference type="Rhea" id="RHEA:13065"/>
        <dbReference type="ChEBI" id="CHEBI:15377"/>
        <dbReference type="ChEBI" id="CHEBI:15378"/>
        <dbReference type="ChEBI" id="CHEBI:30616"/>
        <dbReference type="ChEBI" id="CHEBI:43474"/>
        <dbReference type="ChEBI" id="CHEBI:456216"/>
        <dbReference type="EC" id="3.6.4.13"/>
    </reaction>
</comment>
<comment type="subunit">
    <text evidence="1">Component of the RNA degradosome, which is a multiprotein complex involved in RNA processing and mRNA degradation.</text>
</comment>
<comment type="subcellular location">
    <subcellularLocation>
        <location evidence="1">Cytoplasm</location>
    </subcellularLocation>
</comment>
<comment type="similarity">
    <text evidence="1">Belongs to the DEAD box helicase family. RhlB subfamily.</text>
</comment>